<name>MTGA_SALPK</name>
<dbReference type="EC" id="2.4.99.28" evidence="1"/>
<dbReference type="EMBL" id="FM200053">
    <property type="protein sequence ID" value="CAR61230.1"/>
    <property type="molecule type" value="Genomic_DNA"/>
</dbReference>
<dbReference type="RefSeq" id="WP_000044654.1">
    <property type="nucleotide sequence ID" value="NC_011147.1"/>
</dbReference>
<dbReference type="SMR" id="B5BGN2"/>
<dbReference type="CAZy" id="GT51">
    <property type="family name" value="Glycosyltransferase Family 51"/>
</dbReference>
<dbReference type="KEGG" id="sek:SSPA2981"/>
<dbReference type="HOGENOM" id="CLU_006354_1_1_6"/>
<dbReference type="UniPathway" id="UPA00219"/>
<dbReference type="Proteomes" id="UP000001869">
    <property type="component" value="Chromosome"/>
</dbReference>
<dbReference type="GO" id="GO:0009274">
    <property type="term" value="C:peptidoglycan-based cell wall"/>
    <property type="evidence" value="ECO:0007669"/>
    <property type="project" value="InterPro"/>
</dbReference>
<dbReference type="GO" id="GO:0005886">
    <property type="term" value="C:plasma membrane"/>
    <property type="evidence" value="ECO:0007669"/>
    <property type="project" value="UniProtKB-SubCell"/>
</dbReference>
<dbReference type="GO" id="GO:0016763">
    <property type="term" value="F:pentosyltransferase activity"/>
    <property type="evidence" value="ECO:0007669"/>
    <property type="project" value="InterPro"/>
</dbReference>
<dbReference type="GO" id="GO:0008955">
    <property type="term" value="F:peptidoglycan glycosyltransferase activity"/>
    <property type="evidence" value="ECO:0007669"/>
    <property type="project" value="UniProtKB-UniRule"/>
</dbReference>
<dbReference type="GO" id="GO:0071555">
    <property type="term" value="P:cell wall organization"/>
    <property type="evidence" value="ECO:0007669"/>
    <property type="project" value="UniProtKB-KW"/>
</dbReference>
<dbReference type="GO" id="GO:0009252">
    <property type="term" value="P:peptidoglycan biosynthetic process"/>
    <property type="evidence" value="ECO:0007669"/>
    <property type="project" value="UniProtKB-UniRule"/>
</dbReference>
<dbReference type="GO" id="GO:0008360">
    <property type="term" value="P:regulation of cell shape"/>
    <property type="evidence" value="ECO:0007669"/>
    <property type="project" value="UniProtKB-KW"/>
</dbReference>
<dbReference type="Gene3D" id="1.10.3810.10">
    <property type="entry name" value="Biosynthetic peptidoglycan transglycosylase-like"/>
    <property type="match status" value="1"/>
</dbReference>
<dbReference type="HAMAP" id="MF_00766">
    <property type="entry name" value="PGT_MtgA"/>
    <property type="match status" value="1"/>
</dbReference>
<dbReference type="InterPro" id="IPR001264">
    <property type="entry name" value="Glyco_trans_51"/>
</dbReference>
<dbReference type="InterPro" id="IPR023346">
    <property type="entry name" value="Lysozyme-like_dom_sf"/>
</dbReference>
<dbReference type="InterPro" id="IPR036950">
    <property type="entry name" value="PBP_transglycosylase"/>
</dbReference>
<dbReference type="InterPro" id="IPR011812">
    <property type="entry name" value="Pep_trsgly"/>
</dbReference>
<dbReference type="NCBIfam" id="TIGR02070">
    <property type="entry name" value="mono_pep_trsgly"/>
    <property type="match status" value="1"/>
</dbReference>
<dbReference type="PANTHER" id="PTHR30400:SF0">
    <property type="entry name" value="BIOSYNTHETIC PEPTIDOGLYCAN TRANSGLYCOSYLASE"/>
    <property type="match status" value="1"/>
</dbReference>
<dbReference type="PANTHER" id="PTHR30400">
    <property type="entry name" value="MONOFUNCTIONAL BIOSYNTHETIC PEPTIDOGLYCAN TRANSGLYCOSYLASE"/>
    <property type="match status" value="1"/>
</dbReference>
<dbReference type="Pfam" id="PF00912">
    <property type="entry name" value="Transgly"/>
    <property type="match status" value="1"/>
</dbReference>
<dbReference type="SUPFAM" id="SSF53955">
    <property type="entry name" value="Lysozyme-like"/>
    <property type="match status" value="1"/>
</dbReference>
<reference key="1">
    <citation type="journal article" date="2009" name="BMC Genomics">
        <title>Pseudogene accumulation in the evolutionary histories of Salmonella enterica serovars Paratyphi A and Typhi.</title>
        <authorList>
            <person name="Holt K.E."/>
            <person name="Thomson N.R."/>
            <person name="Wain J."/>
            <person name="Langridge G.C."/>
            <person name="Hasan R."/>
            <person name="Bhutta Z.A."/>
            <person name="Quail M.A."/>
            <person name="Norbertczak H."/>
            <person name="Walker D."/>
            <person name="Simmonds M."/>
            <person name="White B."/>
            <person name="Bason N."/>
            <person name="Mungall K."/>
            <person name="Dougan G."/>
            <person name="Parkhill J."/>
        </authorList>
    </citation>
    <scope>NUCLEOTIDE SEQUENCE [LARGE SCALE GENOMIC DNA]</scope>
    <source>
        <strain>AKU_12601</strain>
    </source>
</reference>
<comment type="function">
    <text evidence="1">Peptidoglycan polymerase that catalyzes glycan chain elongation from lipid-linked precursors.</text>
</comment>
<comment type="catalytic activity">
    <reaction evidence="1">
        <text>[GlcNAc-(1-&gt;4)-Mur2Ac(oyl-L-Ala-gamma-D-Glu-L-Lys-D-Ala-D-Ala)](n)-di-trans,octa-cis-undecaprenyl diphosphate + beta-D-GlcNAc-(1-&gt;4)-Mur2Ac(oyl-L-Ala-gamma-D-Glu-L-Lys-D-Ala-D-Ala)-di-trans,octa-cis-undecaprenyl diphosphate = [GlcNAc-(1-&gt;4)-Mur2Ac(oyl-L-Ala-gamma-D-Glu-L-Lys-D-Ala-D-Ala)](n+1)-di-trans,octa-cis-undecaprenyl diphosphate + di-trans,octa-cis-undecaprenyl diphosphate + H(+)</text>
        <dbReference type="Rhea" id="RHEA:23708"/>
        <dbReference type="Rhea" id="RHEA-COMP:9602"/>
        <dbReference type="Rhea" id="RHEA-COMP:9603"/>
        <dbReference type="ChEBI" id="CHEBI:15378"/>
        <dbReference type="ChEBI" id="CHEBI:58405"/>
        <dbReference type="ChEBI" id="CHEBI:60033"/>
        <dbReference type="ChEBI" id="CHEBI:78435"/>
        <dbReference type="EC" id="2.4.99.28"/>
    </reaction>
</comment>
<comment type="pathway">
    <text evidence="1">Cell wall biogenesis; peptidoglycan biosynthesis.</text>
</comment>
<comment type="subcellular location">
    <subcellularLocation>
        <location evidence="1">Cell inner membrane</location>
        <topology evidence="1">Single-pass membrane protein</topology>
    </subcellularLocation>
</comment>
<comment type="similarity">
    <text evidence="1">Belongs to the glycosyltransferase 51 family.</text>
</comment>
<proteinExistence type="inferred from homology"/>
<gene>
    <name evidence="1" type="primary">mtgA</name>
    <name type="ordered locus">SSPA2981</name>
</gene>
<feature type="chain" id="PRO_1000133610" description="Biosynthetic peptidoglycan transglycosylase">
    <location>
        <begin position="1"/>
        <end position="242"/>
    </location>
</feature>
<feature type="transmembrane region" description="Helical" evidence="1">
    <location>
        <begin position="19"/>
        <end position="39"/>
    </location>
</feature>
<sequence>MSKRRIAPLTFLRRLLLRILAALAVFWGGGIALFSVVPVPFSAVMAERQISAWLGGEFGYVAHSDWVSMADISPWMGLAVITAEDQKFPEHWGFDVPAIEKALAHNERNESRIRGASTLSQQTAKNLFLWDGRSWVRKGLEAGLTLGIETVWSKKRILTVYLNIAEFGDGIFGVEAAAQRYFHKPASRLSVSEAALLAAVLPNPLRYKANAPSGYVRSRQAWIMRQMRQLGGESFMTRNQLN</sequence>
<protein>
    <recommendedName>
        <fullName evidence="1">Biosynthetic peptidoglycan transglycosylase</fullName>
        <ecNumber evidence="1">2.4.99.28</ecNumber>
    </recommendedName>
    <alternativeName>
        <fullName evidence="1">Glycan polymerase</fullName>
    </alternativeName>
    <alternativeName>
        <fullName evidence="1">Peptidoglycan glycosyltransferase MtgA</fullName>
        <shortName evidence="1">PGT</shortName>
    </alternativeName>
</protein>
<keyword id="KW-0997">Cell inner membrane</keyword>
<keyword id="KW-1003">Cell membrane</keyword>
<keyword id="KW-0133">Cell shape</keyword>
<keyword id="KW-0961">Cell wall biogenesis/degradation</keyword>
<keyword id="KW-0328">Glycosyltransferase</keyword>
<keyword id="KW-0472">Membrane</keyword>
<keyword id="KW-0573">Peptidoglycan synthesis</keyword>
<keyword id="KW-0808">Transferase</keyword>
<keyword id="KW-0812">Transmembrane</keyword>
<keyword id="KW-1133">Transmembrane helix</keyword>
<evidence type="ECO:0000255" key="1">
    <source>
        <dbReference type="HAMAP-Rule" id="MF_00766"/>
    </source>
</evidence>
<accession>B5BGN2</accession>
<organism>
    <name type="scientific">Salmonella paratyphi A (strain AKU_12601)</name>
    <dbReference type="NCBI Taxonomy" id="554290"/>
    <lineage>
        <taxon>Bacteria</taxon>
        <taxon>Pseudomonadati</taxon>
        <taxon>Pseudomonadota</taxon>
        <taxon>Gammaproteobacteria</taxon>
        <taxon>Enterobacterales</taxon>
        <taxon>Enterobacteriaceae</taxon>
        <taxon>Salmonella</taxon>
    </lineage>
</organism>